<keyword id="KW-0261">Viral envelope protein</keyword>
<keyword id="KW-0468">Viral matrix protein</keyword>
<keyword id="KW-0946">Virion</keyword>
<sequence length="335" mass="37774">MTEVYDFDQSSWYTKGSLAPILPTTYPDGRLIPQVRVIDPGLGDRKDECFMYIFLMGIIEDNDGLGPPIGRTFGSLPLGVGRTTARPEELLKEATLLDIMVRRTAGVKEQLVFYNNTPLHILTPWKKVLTSGSVFSANQVCNTVNLIPLDIAQRFRVVYMSITRLSDDGSYRIPRGVFEFRSRNALAFNILVTIRVEGDVDSSRGNLGMFKDYQATFMVHIGNFSRKKNQAYSADYCKLKIEKMGLVFALGGIGGTSLHIRCTGKMSKALNAQLGFKKILCYPLMEINEDLNRFLWRSECKIVRIQAVLQPSVPQDFRVYNDVIISDDQGLFKIL</sequence>
<dbReference type="EMBL" id="M12669">
    <property type="protein sequence ID" value="AAA87372.1"/>
    <property type="molecule type" value="Genomic_RNA"/>
</dbReference>
<dbReference type="PIR" id="B93018">
    <property type="entry name" value="MFNZCV"/>
</dbReference>
<dbReference type="SMR" id="P06943"/>
<dbReference type="GO" id="GO:0019031">
    <property type="term" value="C:viral envelope"/>
    <property type="evidence" value="ECO:0007669"/>
    <property type="project" value="UniProtKB-KW"/>
</dbReference>
<dbReference type="GO" id="GO:0039660">
    <property type="term" value="F:structural constituent of virion"/>
    <property type="evidence" value="ECO:0007669"/>
    <property type="project" value="UniProtKB-KW"/>
</dbReference>
<dbReference type="GO" id="GO:0019068">
    <property type="term" value="P:virion assembly"/>
    <property type="evidence" value="ECO:0007669"/>
    <property type="project" value="InterPro"/>
</dbReference>
<dbReference type="Gene3D" id="2.70.20.60">
    <property type="entry name" value="Viral matrix protein, C-terminal domain"/>
    <property type="match status" value="1"/>
</dbReference>
<dbReference type="Gene3D" id="2.70.20.50">
    <property type="entry name" value="Viral matrix protein, N-terminal domain"/>
    <property type="match status" value="1"/>
</dbReference>
<dbReference type="InterPro" id="IPR042539">
    <property type="entry name" value="Matrix_C"/>
</dbReference>
<dbReference type="InterPro" id="IPR042540">
    <property type="entry name" value="Matrix_N"/>
</dbReference>
<dbReference type="InterPro" id="IPR055413">
    <property type="entry name" value="Matrix_Paramyxo_C"/>
</dbReference>
<dbReference type="InterPro" id="IPR000982">
    <property type="entry name" value="Matrix_Paramyxo_N"/>
</dbReference>
<dbReference type="Pfam" id="PF23765">
    <property type="entry name" value="Matrix_Paramyxo_C"/>
    <property type="match status" value="1"/>
</dbReference>
<dbReference type="Pfam" id="PF00661">
    <property type="entry name" value="Matrix_Paramyxo_N"/>
    <property type="match status" value="1"/>
</dbReference>
<protein>
    <recommendedName>
        <fullName>Matrix protein</fullName>
    </recommendedName>
</protein>
<organismHost>
    <name type="scientific">Ailuropoda melanoleuca</name>
    <name type="common">Giant panda</name>
    <dbReference type="NCBI Taxonomy" id="9646"/>
</organismHost>
<organismHost>
    <name type="scientific">Ailurus fulgens</name>
    <name type="common">Himalayan red panda</name>
    <dbReference type="NCBI Taxonomy" id="9649"/>
</organismHost>
<organismHost>
    <name type="scientific">Canis lupus familiaris</name>
    <name type="common">Dog</name>
    <name type="synonym">Canis familiaris</name>
    <dbReference type="NCBI Taxonomy" id="9615"/>
</organismHost>
<organismHost>
    <name type="scientific">Mustela</name>
    <dbReference type="NCBI Taxonomy" id="9665"/>
</organismHost>
<organismHost>
    <name type="scientific">Panthera leo</name>
    <name type="common">Lion</name>
    <dbReference type="NCBI Taxonomy" id="9689"/>
</organismHost>
<organismHost>
    <name type="scientific">Procyon lotor</name>
    <name type="common">Raccoon</name>
    <dbReference type="NCBI Taxonomy" id="9654"/>
</organismHost>
<organismHost>
    <name type="scientific">Zalophus californianus</name>
    <name type="common">California sealion</name>
    <dbReference type="NCBI Taxonomy" id="9704"/>
</organismHost>
<feature type="chain" id="PRO_0000142745" description="Matrix protein">
    <location>
        <begin position="1"/>
        <end position="335"/>
    </location>
</feature>
<name>MATRX_CDVO</name>
<evidence type="ECO:0000305" key="1"/>
<comment type="function">
    <text>The M protein has a crucial role in virus assembly and interacts with the RNP complex as well as with the viral membrane.</text>
</comment>
<comment type="subcellular location">
    <subcellularLocation>
        <location evidence="1">Virion</location>
    </subcellularLocation>
</comment>
<comment type="similarity">
    <text evidence="1">Belongs to the morbillivirus/respirovirus/rubulavirus M protein family.</text>
</comment>
<gene>
    <name type="primary">M</name>
</gene>
<proteinExistence type="inferred from homology"/>
<accession>P06943</accession>
<organism>
    <name type="scientific">Canine distemper virus (strain Onderstepoort)</name>
    <name type="common">CDV</name>
    <dbReference type="NCBI Taxonomy" id="11233"/>
    <lineage>
        <taxon>Viruses</taxon>
        <taxon>Riboviria</taxon>
        <taxon>Orthornavirae</taxon>
        <taxon>Negarnaviricota</taxon>
        <taxon>Haploviricotina</taxon>
        <taxon>Monjiviricetes</taxon>
        <taxon>Mononegavirales</taxon>
        <taxon>Paramyxoviridae</taxon>
        <taxon>Orthoparamyxovirinae</taxon>
        <taxon>Morbillivirus</taxon>
        <taxon>Morbillivirus canis</taxon>
    </lineage>
</organism>
<reference key="1">
    <citation type="journal article" date="1986" name="J. Virol.">
        <title>Matrix genes of measles virus and canine distemper virus: cloning, nucleotide sequences, and deduced amino acid sequences.</title>
        <authorList>
            <person name="Bellini W.J."/>
            <person name="Englund G."/>
            <person name="Richardson C.D."/>
            <person name="Rozenblatt S."/>
            <person name="Lazzarini R.A."/>
        </authorList>
    </citation>
    <scope>NUCLEOTIDE SEQUENCE [GENOMIC RNA]</scope>
</reference>